<reference key="1">
    <citation type="journal article" date="2005" name="Infect. Immun.">
        <title>Whole-genome analyses of speciation events in pathogenic Brucellae.</title>
        <authorList>
            <person name="Chain P.S."/>
            <person name="Comerci D.J."/>
            <person name="Tolmasky M.E."/>
            <person name="Larimer F.W."/>
            <person name="Malfatti S.A."/>
            <person name="Vergez L.M."/>
            <person name="Aguero F."/>
            <person name="Land M.L."/>
            <person name="Ugalde R.A."/>
            <person name="Garcia E."/>
        </authorList>
    </citation>
    <scope>NUCLEOTIDE SEQUENCE [LARGE SCALE GENOMIC DNA]</scope>
    <source>
        <strain>2308</strain>
    </source>
</reference>
<evidence type="ECO:0000255" key="1">
    <source>
        <dbReference type="HAMAP-Rule" id="MF_01547"/>
    </source>
</evidence>
<evidence type="ECO:0000256" key="2">
    <source>
        <dbReference type="SAM" id="MobiDB-lite"/>
    </source>
</evidence>
<evidence type="ECO:0000305" key="3"/>
<proteinExistence type="inferred from homology"/>
<feature type="chain" id="PRO_0000282730" description="Ribosomal RNA large subunit methyltransferase E">
    <location>
        <begin position="1"/>
        <end position="240"/>
    </location>
</feature>
<feature type="region of interest" description="Disordered" evidence="2">
    <location>
        <begin position="1"/>
        <end position="33"/>
    </location>
</feature>
<feature type="compositionally biased region" description="Gly residues" evidence="2">
    <location>
        <begin position="1"/>
        <end position="20"/>
    </location>
</feature>
<feature type="active site" description="Proton acceptor" evidence="1">
    <location>
        <position position="195"/>
    </location>
</feature>
<feature type="binding site" evidence="1">
    <location>
        <position position="92"/>
    </location>
    <ligand>
        <name>S-adenosyl-L-methionine</name>
        <dbReference type="ChEBI" id="CHEBI:59789"/>
    </ligand>
</feature>
<feature type="binding site" evidence="1">
    <location>
        <position position="94"/>
    </location>
    <ligand>
        <name>S-adenosyl-L-methionine</name>
        <dbReference type="ChEBI" id="CHEBI:59789"/>
    </ligand>
</feature>
<feature type="binding site" evidence="1">
    <location>
        <position position="115"/>
    </location>
    <ligand>
        <name>S-adenosyl-L-methionine</name>
        <dbReference type="ChEBI" id="CHEBI:59789"/>
    </ligand>
</feature>
<feature type="binding site" evidence="1">
    <location>
        <position position="131"/>
    </location>
    <ligand>
        <name>S-adenosyl-L-methionine</name>
        <dbReference type="ChEBI" id="CHEBI:59789"/>
    </ligand>
</feature>
<feature type="binding site" evidence="1">
    <location>
        <position position="155"/>
    </location>
    <ligand>
        <name>S-adenosyl-L-methionine</name>
        <dbReference type="ChEBI" id="CHEBI:59789"/>
    </ligand>
</feature>
<name>RLME_BRUA2</name>
<comment type="function">
    <text evidence="1">Specifically methylates the uridine in position 2552 of 23S rRNA at the 2'-O position of the ribose in the fully assembled 50S ribosomal subunit.</text>
</comment>
<comment type="catalytic activity">
    <reaction evidence="1">
        <text>uridine(2552) in 23S rRNA + S-adenosyl-L-methionine = 2'-O-methyluridine(2552) in 23S rRNA + S-adenosyl-L-homocysteine + H(+)</text>
        <dbReference type="Rhea" id="RHEA:42720"/>
        <dbReference type="Rhea" id="RHEA-COMP:10202"/>
        <dbReference type="Rhea" id="RHEA-COMP:10203"/>
        <dbReference type="ChEBI" id="CHEBI:15378"/>
        <dbReference type="ChEBI" id="CHEBI:57856"/>
        <dbReference type="ChEBI" id="CHEBI:59789"/>
        <dbReference type="ChEBI" id="CHEBI:65315"/>
        <dbReference type="ChEBI" id="CHEBI:74478"/>
        <dbReference type="EC" id="2.1.1.166"/>
    </reaction>
</comment>
<comment type="subcellular location">
    <subcellularLocation>
        <location evidence="1">Cytoplasm</location>
    </subcellularLocation>
</comment>
<comment type="similarity">
    <text evidence="1">Belongs to the class I-like SAM-binding methyltransferase superfamily. RNA methyltransferase RlmE family.</text>
</comment>
<comment type="sequence caution" evidence="3">
    <conflict type="erroneous initiation">
        <sequence resource="EMBL-CDS" id="CAJ12720"/>
    </conflict>
</comment>
<protein>
    <recommendedName>
        <fullName evidence="1">Ribosomal RNA large subunit methyltransferase E</fullName>
        <ecNumber evidence="1">2.1.1.166</ecNumber>
    </recommendedName>
    <alternativeName>
        <fullName evidence="1">23S rRNA Um2552 methyltransferase</fullName>
    </alternativeName>
    <alternativeName>
        <fullName evidence="1">rRNA (uridine-2'-O-)-methyltransferase</fullName>
    </alternativeName>
</protein>
<dbReference type="EC" id="2.1.1.166" evidence="1"/>
<dbReference type="EMBL" id="AM040265">
    <property type="protein sequence ID" value="CAJ12720.1"/>
    <property type="status" value="ALT_INIT"/>
    <property type="molecule type" value="Genomic_DNA"/>
</dbReference>
<dbReference type="RefSeq" id="WP_002965955.1">
    <property type="nucleotide sequence ID" value="NZ_KN046823.1"/>
</dbReference>
<dbReference type="SMR" id="Q2YKU4"/>
<dbReference type="STRING" id="359391.BAB2_0554"/>
<dbReference type="KEGG" id="bmf:BAB2_0554"/>
<dbReference type="PATRIC" id="fig|359391.11.peg.2744"/>
<dbReference type="HOGENOM" id="CLU_009422_4_0_5"/>
<dbReference type="PhylomeDB" id="Q2YKU4"/>
<dbReference type="Proteomes" id="UP000002719">
    <property type="component" value="Chromosome II"/>
</dbReference>
<dbReference type="GO" id="GO:0005737">
    <property type="term" value="C:cytoplasm"/>
    <property type="evidence" value="ECO:0007669"/>
    <property type="project" value="UniProtKB-SubCell"/>
</dbReference>
<dbReference type="GO" id="GO:0008650">
    <property type="term" value="F:rRNA (uridine-2'-O-)-methyltransferase activity"/>
    <property type="evidence" value="ECO:0007669"/>
    <property type="project" value="UniProtKB-UniRule"/>
</dbReference>
<dbReference type="Gene3D" id="3.40.50.150">
    <property type="entry name" value="Vaccinia Virus protein VP39"/>
    <property type="match status" value="1"/>
</dbReference>
<dbReference type="HAMAP" id="MF_01547">
    <property type="entry name" value="RNA_methyltr_E"/>
    <property type="match status" value="1"/>
</dbReference>
<dbReference type="InterPro" id="IPR050082">
    <property type="entry name" value="RNA_methyltr_RlmE"/>
</dbReference>
<dbReference type="InterPro" id="IPR002877">
    <property type="entry name" value="RNA_MeTrfase_FtsJ_dom"/>
</dbReference>
<dbReference type="InterPro" id="IPR015507">
    <property type="entry name" value="rRNA-MeTfrase_E"/>
</dbReference>
<dbReference type="InterPro" id="IPR029063">
    <property type="entry name" value="SAM-dependent_MTases_sf"/>
</dbReference>
<dbReference type="PANTHER" id="PTHR10920">
    <property type="entry name" value="RIBOSOMAL RNA METHYLTRANSFERASE"/>
    <property type="match status" value="1"/>
</dbReference>
<dbReference type="PANTHER" id="PTHR10920:SF18">
    <property type="entry name" value="RRNA METHYLTRANSFERASE 2, MITOCHONDRIAL"/>
    <property type="match status" value="1"/>
</dbReference>
<dbReference type="Pfam" id="PF01728">
    <property type="entry name" value="FtsJ"/>
    <property type="match status" value="1"/>
</dbReference>
<dbReference type="PIRSF" id="PIRSF005461">
    <property type="entry name" value="23S_rRNA_mtase"/>
    <property type="match status" value="1"/>
</dbReference>
<dbReference type="SUPFAM" id="SSF53335">
    <property type="entry name" value="S-adenosyl-L-methionine-dependent methyltransferases"/>
    <property type="match status" value="1"/>
</dbReference>
<accession>Q2YKU4</accession>
<sequence>MSKAGGNKGGSRTGGRGGAGSSNLHVRVKKKAGTIKESSRRWLERHLNDPYVHKSRQDGYRSRAAYKLIEINDRYNLLKKGQKIIDLGAAPGGWSQIAARIVGSTDENPQVVGIDYLHVDPLPGVILLEMDFLDDEAPQKLMDALGDKPDLVISDMAAPTTGHRRTDHLRTVHLCEVAADFAVSVLKPGGHFLTKTFQGGTENELLALLKQKFRSVHHVKPPASRAESVELYLLARDFKG</sequence>
<keyword id="KW-0963">Cytoplasm</keyword>
<keyword id="KW-0489">Methyltransferase</keyword>
<keyword id="KW-1185">Reference proteome</keyword>
<keyword id="KW-0698">rRNA processing</keyword>
<keyword id="KW-0949">S-adenosyl-L-methionine</keyword>
<keyword id="KW-0808">Transferase</keyword>
<gene>
    <name evidence="1" type="primary">rlmE</name>
    <name evidence="1" type="synonym">ftsJ</name>
    <name evidence="1" type="synonym">rrmJ</name>
    <name type="ordered locus">BAB2_0554</name>
</gene>
<organism>
    <name type="scientific">Brucella abortus (strain 2308)</name>
    <dbReference type="NCBI Taxonomy" id="359391"/>
    <lineage>
        <taxon>Bacteria</taxon>
        <taxon>Pseudomonadati</taxon>
        <taxon>Pseudomonadota</taxon>
        <taxon>Alphaproteobacteria</taxon>
        <taxon>Hyphomicrobiales</taxon>
        <taxon>Brucellaceae</taxon>
        <taxon>Brucella/Ochrobactrum group</taxon>
        <taxon>Brucella</taxon>
    </lineage>
</organism>